<organism>
    <name type="scientific">Vibrio vulnificus (strain CMCP6)</name>
    <dbReference type="NCBI Taxonomy" id="216895"/>
    <lineage>
        <taxon>Bacteria</taxon>
        <taxon>Pseudomonadati</taxon>
        <taxon>Pseudomonadota</taxon>
        <taxon>Gammaproteobacteria</taxon>
        <taxon>Vibrionales</taxon>
        <taxon>Vibrionaceae</taxon>
        <taxon>Vibrio</taxon>
    </lineage>
</organism>
<evidence type="ECO:0000255" key="1">
    <source>
        <dbReference type="HAMAP-Rule" id="MF_00462"/>
    </source>
</evidence>
<gene>
    <name evidence="1" type="primary">rnfD</name>
    <name type="ordered locus">VV1_3096</name>
</gene>
<reference key="1">
    <citation type="submission" date="2002-12" db="EMBL/GenBank/DDBJ databases">
        <title>Complete genome sequence of Vibrio vulnificus CMCP6.</title>
        <authorList>
            <person name="Rhee J.H."/>
            <person name="Kim S.Y."/>
            <person name="Chung S.S."/>
            <person name="Kim J.J."/>
            <person name="Moon Y.H."/>
            <person name="Jeong H."/>
            <person name="Choy H.E."/>
        </authorList>
    </citation>
    <scope>NUCLEOTIDE SEQUENCE [LARGE SCALE GENOMIC DNA]</scope>
    <source>
        <strain>CMCP6</strain>
    </source>
</reference>
<proteinExistence type="inferred from homology"/>
<protein>
    <recommendedName>
        <fullName evidence="1">Ion-translocating oxidoreductase complex subunit D</fullName>
        <ecNumber evidence="1">7.-.-.-</ecNumber>
    </recommendedName>
    <alternativeName>
        <fullName evidence="1">Rnf electron transport complex subunit D</fullName>
    </alternativeName>
</protein>
<comment type="function">
    <text evidence="1">Part of a membrane-bound complex that couples electron transfer with translocation of ions across the membrane.</text>
</comment>
<comment type="cofactor">
    <cofactor evidence="1">
        <name>FMN</name>
        <dbReference type="ChEBI" id="CHEBI:58210"/>
    </cofactor>
</comment>
<comment type="subunit">
    <text evidence="1">The complex is composed of six subunits: RnfA, RnfB, RnfC, RnfD, RnfE and RnfG.</text>
</comment>
<comment type="subcellular location">
    <subcellularLocation>
        <location evidence="1">Cell inner membrane</location>
        <topology evidence="1">Multi-pass membrane protein</topology>
    </subcellularLocation>
</comment>
<comment type="similarity">
    <text evidence="1">Belongs to the NqrB/RnfD family.</text>
</comment>
<sequence>MSFFIASSPHAHSRKSTPDLMKWVALCALPGLLAQTYFFGWGTLVQLILAITIALSLEALVMLFRKRPPMRALRDHSALVTAWLLAVAIPPMAPWWIITIGLLFAIVIAKHLYGGLGQNPFNPAMIAYVVLLISFPVQMTSWSAPLPLIEAGHEVAKDPVTFGDLLSLIFTGLTIDGSSLQQVRAGIDGITTATPLDAFKTGLHSGATSSEILSQPIFEGFAGVGWQWVNLAYLAGGLILLKQRVIQWHIPVGFLGALLVMSSFFSLFFPGETASPLFHLLSGATMLGAFFIATDPVSASTTIKGRILFGAIIGTLVFIIRSWGGFPDGVAFAVLLANMCVPLIDYYTKPRTYGH</sequence>
<accession>Q8D887</accession>
<feature type="chain" id="PRO_0000074465" description="Ion-translocating oxidoreductase complex subunit D">
    <location>
        <begin position="1"/>
        <end position="355"/>
    </location>
</feature>
<feature type="transmembrane region" description="Helical" evidence="1">
    <location>
        <begin position="23"/>
        <end position="43"/>
    </location>
</feature>
<feature type="transmembrane region" description="Helical" evidence="1">
    <location>
        <begin position="44"/>
        <end position="64"/>
    </location>
</feature>
<feature type="transmembrane region" description="Helical" evidence="1">
    <location>
        <begin position="78"/>
        <end position="109"/>
    </location>
</feature>
<feature type="transmembrane region" description="Helical" evidence="1">
    <location>
        <begin position="129"/>
        <end position="149"/>
    </location>
</feature>
<feature type="transmembrane region" description="Helical" evidence="1">
    <location>
        <begin position="221"/>
        <end position="241"/>
    </location>
</feature>
<feature type="transmembrane region" description="Helical" evidence="1">
    <location>
        <begin position="250"/>
        <end position="270"/>
    </location>
</feature>
<feature type="transmembrane region" description="Helical" evidence="1">
    <location>
        <begin position="273"/>
        <end position="293"/>
    </location>
</feature>
<feature type="transmembrane region" description="Helical" evidence="1">
    <location>
        <begin position="307"/>
        <end position="327"/>
    </location>
</feature>
<feature type="transmembrane region" description="Helical" evidence="1">
    <location>
        <begin position="328"/>
        <end position="348"/>
    </location>
</feature>
<feature type="modified residue" description="FMN phosphoryl threonine" evidence="1">
    <location>
        <position position="194"/>
    </location>
</feature>
<name>RNFD_VIBVU</name>
<keyword id="KW-0997">Cell inner membrane</keyword>
<keyword id="KW-1003">Cell membrane</keyword>
<keyword id="KW-0249">Electron transport</keyword>
<keyword id="KW-0285">Flavoprotein</keyword>
<keyword id="KW-0288">FMN</keyword>
<keyword id="KW-0472">Membrane</keyword>
<keyword id="KW-0597">Phosphoprotein</keyword>
<keyword id="KW-1278">Translocase</keyword>
<keyword id="KW-0812">Transmembrane</keyword>
<keyword id="KW-1133">Transmembrane helix</keyword>
<keyword id="KW-0813">Transport</keyword>
<dbReference type="EC" id="7.-.-.-" evidence="1"/>
<dbReference type="EMBL" id="AE016795">
    <property type="protein sequence ID" value="AAO11419.1"/>
    <property type="molecule type" value="Genomic_DNA"/>
</dbReference>
<dbReference type="SMR" id="Q8D887"/>
<dbReference type="KEGG" id="vvu:VV1_3096"/>
<dbReference type="HOGENOM" id="CLU_042020_0_0_6"/>
<dbReference type="Proteomes" id="UP000002275">
    <property type="component" value="Chromosome 1"/>
</dbReference>
<dbReference type="GO" id="GO:0005886">
    <property type="term" value="C:plasma membrane"/>
    <property type="evidence" value="ECO:0007669"/>
    <property type="project" value="UniProtKB-SubCell"/>
</dbReference>
<dbReference type="GO" id="GO:0022900">
    <property type="term" value="P:electron transport chain"/>
    <property type="evidence" value="ECO:0007669"/>
    <property type="project" value="UniProtKB-UniRule"/>
</dbReference>
<dbReference type="GO" id="GO:0055085">
    <property type="term" value="P:transmembrane transport"/>
    <property type="evidence" value="ECO:0007669"/>
    <property type="project" value="InterPro"/>
</dbReference>
<dbReference type="HAMAP" id="MF_00462">
    <property type="entry name" value="RsxD_RnfD"/>
    <property type="match status" value="1"/>
</dbReference>
<dbReference type="InterPro" id="IPR004338">
    <property type="entry name" value="NqrB/RnfD"/>
</dbReference>
<dbReference type="InterPro" id="IPR011303">
    <property type="entry name" value="RnfD_bac"/>
</dbReference>
<dbReference type="NCBIfam" id="NF002011">
    <property type="entry name" value="PRK00816.1"/>
    <property type="match status" value="1"/>
</dbReference>
<dbReference type="NCBIfam" id="TIGR01946">
    <property type="entry name" value="rnfD"/>
    <property type="match status" value="1"/>
</dbReference>
<dbReference type="PANTHER" id="PTHR30578">
    <property type="entry name" value="ELECTRON TRANSPORT COMPLEX PROTEIN RNFD"/>
    <property type="match status" value="1"/>
</dbReference>
<dbReference type="PANTHER" id="PTHR30578:SF0">
    <property type="entry name" value="ION-TRANSLOCATING OXIDOREDUCTASE COMPLEX SUBUNIT D"/>
    <property type="match status" value="1"/>
</dbReference>
<dbReference type="Pfam" id="PF03116">
    <property type="entry name" value="NQR2_RnfD_RnfE"/>
    <property type="match status" value="1"/>
</dbReference>